<gene>
    <name type="primary">OR2M7</name>
</gene>
<comment type="function">
    <text evidence="3">Odorant receptor.</text>
</comment>
<comment type="subcellular location">
    <subcellularLocation>
        <location>Cell membrane</location>
        <topology>Multi-pass membrane protein</topology>
    </subcellularLocation>
</comment>
<comment type="similarity">
    <text evidence="2">Belongs to the G-protein coupled receptor 1 family.</text>
</comment>
<comment type="online information" name="Human Olfactory Receptor Data Exploratorium (HORDE)">
    <link uri="http://genome.weizmann.ac.il/horde/card/index/symbol:OR2M7"/>
</comment>
<accession>Q8NG81</accession>
<accession>B2RNL0</accession>
<accession>Q6IEX6</accession>
<proteinExistence type="evidence at transcript level"/>
<protein>
    <recommendedName>
        <fullName>Olfactory receptor 2M7</fullName>
    </recommendedName>
    <alternativeName>
        <fullName>Olfactory receptor OR1-58</fullName>
    </alternativeName>
</protein>
<dbReference type="EMBL" id="AB065954">
    <property type="protein sequence ID" value="BAC06167.1"/>
    <property type="molecule type" value="Genomic_DNA"/>
</dbReference>
<dbReference type="EMBL" id="AL450303">
    <property type="status" value="NOT_ANNOTATED_CDS"/>
    <property type="molecule type" value="Genomic_DNA"/>
</dbReference>
<dbReference type="EMBL" id="BC136944">
    <property type="protein sequence ID" value="AAI36945.1"/>
    <property type="molecule type" value="mRNA"/>
</dbReference>
<dbReference type="EMBL" id="BC136946">
    <property type="protein sequence ID" value="AAI36947.1"/>
    <property type="molecule type" value="mRNA"/>
</dbReference>
<dbReference type="EMBL" id="BK004486">
    <property type="protein sequence ID" value="DAA04884.1"/>
    <property type="molecule type" value="Genomic_DNA"/>
</dbReference>
<dbReference type="CCDS" id="CCDS31111.1"/>
<dbReference type="RefSeq" id="NP_001004691.1">
    <property type="nucleotide sequence ID" value="NM_001004691.1"/>
</dbReference>
<dbReference type="SMR" id="Q8NG81"/>
<dbReference type="BioGRID" id="133853">
    <property type="interactions" value="41"/>
</dbReference>
<dbReference type="FunCoup" id="Q8NG81">
    <property type="interactions" value="455"/>
</dbReference>
<dbReference type="IntAct" id="Q8NG81">
    <property type="interactions" value="21"/>
</dbReference>
<dbReference type="STRING" id="9606.ENSP00000324557"/>
<dbReference type="GlyCosmos" id="Q8NG81">
    <property type="glycosylation" value="1 site, No reported glycans"/>
</dbReference>
<dbReference type="GlyGen" id="Q8NG81">
    <property type="glycosylation" value="1 site"/>
</dbReference>
<dbReference type="iPTMnet" id="Q8NG81"/>
<dbReference type="PhosphoSitePlus" id="Q8NG81"/>
<dbReference type="BioMuta" id="OR2M7"/>
<dbReference type="DMDM" id="38372497"/>
<dbReference type="MassIVE" id="Q8NG81"/>
<dbReference type="PaxDb" id="9606-ENSP00000324557"/>
<dbReference type="Antibodypedia" id="57435">
    <property type="antibodies" value="86 antibodies from 20 providers"/>
</dbReference>
<dbReference type="DNASU" id="391196"/>
<dbReference type="Ensembl" id="ENST00000317965.3">
    <property type="protein sequence ID" value="ENSP00000324557.2"/>
    <property type="gene ID" value="ENSG00000177186.3"/>
</dbReference>
<dbReference type="GeneID" id="391196"/>
<dbReference type="KEGG" id="hsa:391196"/>
<dbReference type="MANE-Select" id="ENST00000317965.3">
    <property type="protein sequence ID" value="ENSP00000324557.2"/>
    <property type="RefSeq nucleotide sequence ID" value="NM_001004691.1"/>
    <property type="RefSeq protein sequence ID" value="NP_001004691.1"/>
</dbReference>
<dbReference type="UCSC" id="uc010pzk.2">
    <property type="organism name" value="human"/>
</dbReference>
<dbReference type="AGR" id="HGNC:19594"/>
<dbReference type="CTD" id="391196"/>
<dbReference type="GeneCards" id="OR2M7"/>
<dbReference type="HGNC" id="HGNC:19594">
    <property type="gene designation" value="OR2M7"/>
</dbReference>
<dbReference type="HPA" id="ENSG00000177186">
    <property type="expression patterns" value="Not detected"/>
</dbReference>
<dbReference type="MIM" id="618509">
    <property type="type" value="gene"/>
</dbReference>
<dbReference type="neXtProt" id="NX_Q8NG81"/>
<dbReference type="OpenTargets" id="ENSG00000177186"/>
<dbReference type="PharmGKB" id="PA134874354"/>
<dbReference type="VEuPathDB" id="HostDB:ENSG00000177186"/>
<dbReference type="eggNOG" id="ENOG502SHXQ">
    <property type="taxonomic scope" value="Eukaryota"/>
</dbReference>
<dbReference type="GeneTree" id="ENSGT01130000278260"/>
<dbReference type="HOGENOM" id="CLU_012526_1_2_1"/>
<dbReference type="InParanoid" id="Q8NG81"/>
<dbReference type="OMA" id="YIQPTSH"/>
<dbReference type="OrthoDB" id="9831471at2759"/>
<dbReference type="PAN-GO" id="Q8NG81">
    <property type="GO annotations" value="0 GO annotations based on evolutionary models"/>
</dbReference>
<dbReference type="PhylomeDB" id="Q8NG81"/>
<dbReference type="TreeFam" id="TF337295"/>
<dbReference type="PathwayCommons" id="Q8NG81"/>
<dbReference type="Reactome" id="R-HSA-381753">
    <property type="pathway name" value="Olfactory Signaling Pathway"/>
</dbReference>
<dbReference type="Reactome" id="R-HSA-9752946">
    <property type="pathway name" value="Expression and translocation of olfactory receptors"/>
</dbReference>
<dbReference type="BioGRID-ORCS" id="391196">
    <property type="hits" value="6 hits in 681 CRISPR screens"/>
</dbReference>
<dbReference type="GeneWiki" id="OR2M7"/>
<dbReference type="GenomeRNAi" id="391196"/>
<dbReference type="Pharos" id="Q8NG81">
    <property type="development level" value="Tdark"/>
</dbReference>
<dbReference type="PRO" id="PR:Q8NG81"/>
<dbReference type="Proteomes" id="UP000005640">
    <property type="component" value="Chromosome 1"/>
</dbReference>
<dbReference type="RNAct" id="Q8NG81">
    <property type="molecule type" value="protein"/>
</dbReference>
<dbReference type="Bgee" id="ENSG00000177186">
    <property type="expression patterns" value="Expressed in male germ line stem cell (sensu Vertebrata) in testis and 1 other cell type or tissue"/>
</dbReference>
<dbReference type="ExpressionAtlas" id="Q8NG81">
    <property type="expression patterns" value="baseline and differential"/>
</dbReference>
<dbReference type="GO" id="GO:0005886">
    <property type="term" value="C:plasma membrane"/>
    <property type="evidence" value="ECO:0000318"/>
    <property type="project" value="GO_Central"/>
</dbReference>
<dbReference type="GO" id="GO:0004930">
    <property type="term" value="F:G protein-coupled receptor activity"/>
    <property type="evidence" value="ECO:0007669"/>
    <property type="project" value="UniProtKB-KW"/>
</dbReference>
<dbReference type="GO" id="GO:0004984">
    <property type="term" value="F:olfactory receptor activity"/>
    <property type="evidence" value="ECO:0000318"/>
    <property type="project" value="GO_Central"/>
</dbReference>
<dbReference type="GO" id="GO:0050911">
    <property type="term" value="P:detection of chemical stimulus involved in sensory perception of smell"/>
    <property type="evidence" value="ECO:0000318"/>
    <property type="project" value="GO_Central"/>
</dbReference>
<dbReference type="CDD" id="cd15421">
    <property type="entry name" value="7tmA_OR2T-like"/>
    <property type="match status" value="1"/>
</dbReference>
<dbReference type="FunFam" id="1.20.1070.10:FF:000008">
    <property type="entry name" value="Olfactory receptor"/>
    <property type="match status" value="1"/>
</dbReference>
<dbReference type="Gene3D" id="1.20.1070.10">
    <property type="entry name" value="Rhodopsin 7-helix transmembrane proteins"/>
    <property type="match status" value="1"/>
</dbReference>
<dbReference type="InterPro" id="IPR000276">
    <property type="entry name" value="GPCR_Rhodpsn"/>
</dbReference>
<dbReference type="InterPro" id="IPR017452">
    <property type="entry name" value="GPCR_Rhodpsn_7TM"/>
</dbReference>
<dbReference type="InterPro" id="IPR000725">
    <property type="entry name" value="Olfact_rcpt"/>
</dbReference>
<dbReference type="PANTHER" id="PTHR26453">
    <property type="entry name" value="OLFACTORY RECEPTOR"/>
    <property type="match status" value="1"/>
</dbReference>
<dbReference type="Pfam" id="PF13853">
    <property type="entry name" value="7tm_4"/>
    <property type="match status" value="1"/>
</dbReference>
<dbReference type="PRINTS" id="PR00237">
    <property type="entry name" value="GPCRRHODOPSN"/>
</dbReference>
<dbReference type="PRINTS" id="PR00245">
    <property type="entry name" value="OLFACTORYR"/>
</dbReference>
<dbReference type="SUPFAM" id="SSF81321">
    <property type="entry name" value="Family A G protein-coupled receptor-like"/>
    <property type="match status" value="1"/>
</dbReference>
<dbReference type="PROSITE" id="PS00237">
    <property type="entry name" value="G_PROTEIN_RECEP_F1_1"/>
    <property type="match status" value="1"/>
</dbReference>
<dbReference type="PROSITE" id="PS50262">
    <property type="entry name" value="G_PROTEIN_RECEP_F1_2"/>
    <property type="match status" value="1"/>
</dbReference>
<feature type="chain" id="PRO_0000150494" description="Olfactory receptor 2M7">
    <location>
        <begin position="1"/>
        <end position="312"/>
    </location>
</feature>
<feature type="topological domain" description="Extracellular" evidence="1">
    <location>
        <begin position="1"/>
        <end position="25"/>
    </location>
</feature>
<feature type="transmembrane region" description="Helical; Name=1" evidence="1">
    <location>
        <begin position="26"/>
        <end position="49"/>
    </location>
</feature>
<feature type="topological domain" description="Cytoplasmic" evidence="1">
    <location>
        <begin position="50"/>
        <end position="57"/>
    </location>
</feature>
<feature type="transmembrane region" description="Helical; Name=2" evidence="1">
    <location>
        <begin position="58"/>
        <end position="79"/>
    </location>
</feature>
<feature type="topological domain" description="Extracellular" evidence="1">
    <location>
        <begin position="80"/>
        <end position="100"/>
    </location>
</feature>
<feature type="transmembrane region" description="Helical; Name=3" evidence="1">
    <location>
        <begin position="101"/>
        <end position="120"/>
    </location>
</feature>
<feature type="topological domain" description="Cytoplasmic" evidence="1">
    <location>
        <begin position="121"/>
        <end position="139"/>
    </location>
</feature>
<feature type="transmembrane region" description="Helical; Name=4" evidence="1">
    <location>
        <begin position="140"/>
        <end position="158"/>
    </location>
</feature>
<feature type="topological domain" description="Extracellular" evidence="1">
    <location>
        <begin position="159"/>
        <end position="195"/>
    </location>
</feature>
<feature type="transmembrane region" description="Helical; Name=5" evidence="1">
    <location>
        <begin position="196"/>
        <end position="219"/>
    </location>
</feature>
<feature type="topological domain" description="Cytoplasmic" evidence="1">
    <location>
        <begin position="220"/>
        <end position="236"/>
    </location>
</feature>
<feature type="transmembrane region" description="Helical; Name=6" evidence="1">
    <location>
        <begin position="237"/>
        <end position="259"/>
    </location>
</feature>
<feature type="topological domain" description="Extracellular" evidence="1">
    <location>
        <begin position="260"/>
        <end position="272"/>
    </location>
</feature>
<feature type="transmembrane region" description="Helical; Name=7" evidence="1">
    <location>
        <begin position="273"/>
        <end position="292"/>
    </location>
</feature>
<feature type="topological domain" description="Cytoplasmic" evidence="1">
    <location>
        <begin position="293"/>
        <end position="311"/>
    </location>
</feature>
<feature type="glycosylation site" description="N-linked (GlcNAc...) asparagine" evidence="1">
    <location>
        <position position="5"/>
    </location>
</feature>
<feature type="disulfide bond" evidence="2">
    <location>
        <begin position="97"/>
        <end position="189"/>
    </location>
</feature>
<feature type="sequence variant" id="VAR_059992" description="In dbSNP:rs7555424.">
    <original>F</original>
    <variation>L</variation>
    <location>
        <position position="35"/>
    </location>
</feature>
<feature type="sequence variant" id="VAR_053149" description="In dbSNP:rs7555310.">
    <original>V</original>
    <variation>A</variation>
    <location>
        <position position="78"/>
    </location>
</feature>
<feature type="sequence variant" id="VAR_053150" description="In dbSNP:rs4916130.">
    <original>C</original>
    <variation>F</variation>
    <location>
        <position position="178"/>
    </location>
</feature>
<feature type="sequence variant" id="VAR_059993" description="In dbSNP:rs4916129.">
    <original>D</original>
    <variation>N</variation>
    <location>
        <position position="191"/>
    </location>
</feature>
<name>OR2M7_HUMAN</name>
<keyword id="KW-1003">Cell membrane</keyword>
<keyword id="KW-1015">Disulfide bond</keyword>
<keyword id="KW-0297">G-protein coupled receptor</keyword>
<keyword id="KW-0325">Glycoprotein</keyword>
<keyword id="KW-0472">Membrane</keyword>
<keyword id="KW-0552">Olfaction</keyword>
<keyword id="KW-0675">Receptor</keyword>
<keyword id="KW-1185">Reference proteome</keyword>
<keyword id="KW-0716">Sensory transduction</keyword>
<keyword id="KW-0807">Transducer</keyword>
<keyword id="KW-0812">Transmembrane</keyword>
<keyword id="KW-1133">Transmembrane helix</keyword>
<reference key="1">
    <citation type="submission" date="2001-07" db="EMBL/GenBank/DDBJ databases">
        <title>Genome-wide discovery and analysis of human seven transmembrane helix receptor genes.</title>
        <authorList>
            <person name="Suwa M."/>
            <person name="Sato T."/>
            <person name="Okouchi I."/>
            <person name="Arita M."/>
            <person name="Futami K."/>
            <person name="Matsumoto S."/>
            <person name="Tsutsumi S."/>
            <person name="Aburatani H."/>
            <person name="Asai K."/>
            <person name="Akiyama Y."/>
        </authorList>
    </citation>
    <scope>NUCLEOTIDE SEQUENCE [GENOMIC DNA]</scope>
</reference>
<reference key="2">
    <citation type="journal article" date="2006" name="Nature">
        <title>The DNA sequence and biological annotation of human chromosome 1.</title>
        <authorList>
            <person name="Gregory S.G."/>
            <person name="Barlow K.F."/>
            <person name="McLay K.E."/>
            <person name="Kaul R."/>
            <person name="Swarbreck D."/>
            <person name="Dunham A."/>
            <person name="Scott C.E."/>
            <person name="Howe K.L."/>
            <person name="Woodfine K."/>
            <person name="Spencer C.C.A."/>
            <person name="Jones M.C."/>
            <person name="Gillson C."/>
            <person name="Searle S."/>
            <person name="Zhou Y."/>
            <person name="Kokocinski F."/>
            <person name="McDonald L."/>
            <person name="Evans R."/>
            <person name="Phillips K."/>
            <person name="Atkinson A."/>
            <person name="Cooper R."/>
            <person name="Jones C."/>
            <person name="Hall R.E."/>
            <person name="Andrews T.D."/>
            <person name="Lloyd C."/>
            <person name="Ainscough R."/>
            <person name="Almeida J.P."/>
            <person name="Ambrose K.D."/>
            <person name="Anderson F."/>
            <person name="Andrew R.W."/>
            <person name="Ashwell R.I.S."/>
            <person name="Aubin K."/>
            <person name="Babbage A.K."/>
            <person name="Bagguley C.L."/>
            <person name="Bailey J."/>
            <person name="Beasley H."/>
            <person name="Bethel G."/>
            <person name="Bird C.P."/>
            <person name="Bray-Allen S."/>
            <person name="Brown J.Y."/>
            <person name="Brown A.J."/>
            <person name="Buckley D."/>
            <person name="Burton J."/>
            <person name="Bye J."/>
            <person name="Carder C."/>
            <person name="Chapman J.C."/>
            <person name="Clark S.Y."/>
            <person name="Clarke G."/>
            <person name="Clee C."/>
            <person name="Cobley V."/>
            <person name="Collier R.E."/>
            <person name="Corby N."/>
            <person name="Coville G.J."/>
            <person name="Davies J."/>
            <person name="Deadman R."/>
            <person name="Dunn M."/>
            <person name="Earthrowl M."/>
            <person name="Ellington A.G."/>
            <person name="Errington H."/>
            <person name="Frankish A."/>
            <person name="Frankland J."/>
            <person name="French L."/>
            <person name="Garner P."/>
            <person name="Garnett J."/>
            <person name="Gay L."/>
            <person name="Ghori M.R.J."/>
            <person name="Gibson R."/>
            <person name="Gilby L.M."/>
            <person name="Gillett W."/>
            <person name="Glithero R.J."/>
            <person name="Grafham D.V."/>
            <person name="Griffiths C."/>
            <person name="Griffiths-Jones S."/>
            <person name="Grocock R."/>
            <person name="Hammond S."/>
            <person name="Harrison E.S.I."/>
            <person name="Hart E."/>
            <person name="Haugen E."/>
            <person name="Heath P.D."/>
            <person name="Holmes S."/>
            <person name="Holt K."/>
            <person name="Howden P.J."/>
            <person name="Hunt A.R."/>
            <person name="Hunt S.E."/>
            <person name="Hunter G."/>
            <person name="Isherwood J."/>
            <person name="James R."/>
            <person name="Johnson C."/>
            <person name="Johnson D."/>
            <person name="Joy A."/>
            <person name="Kay M."/>
            <person name="Kershaw J.K."/>
            <person name="Kibukawa M."/>
            <person name="Kimberley A.M."/>
            <person name="King A."/>
            <person name="Knights A.J."/>
            <person name="Lad H."/>
            <person name="Laird G."/>
            <person name="Lawlor S."/>
            <person name="Leongamornlert D.A."/>
            <person name="Lloyd D.M."/>
            <person name="Loveland J."/>
            <person name="Lovell J."/>
            <person name="Lush M.J."/>
            <person name="Lyne R."/>
            <person name="Martin S."/>
            <person name="Mashreghi-Mohammadi M."/>
            <person name="Matthews L."/>
            <person name="Matthews N.S.W."/>
            <person name="McLaren S."/>
            <person name="Milne S."/>
            <person name="Mistry S."/>
            <person name="Moore M.J.F."/>
            <person name="Nickerson T."/>
            <person name="O'Dell C.N."/>
            <person name="Oliver K."/>
            <person name="Palmeiri A."/>
            <person name="Palmer S.A."/>
            <person name="Parker A."/>
            <person name="Patel D."/>
            <person name="Pearce A.V."/>
            <person name="Peck A.I."/>
            <person name="Pelan S."/>
            <person name="Phelps K."/>
            <person name="Phillimore B.J."/>
            <person name="Plumb R."/>
            <person name="Rajan J."/>
            <person name="Raymond C."/>
            <person name="Rouse G."/>
            <person name="Saenphimmachak C."/>
            <person name="Sehra H.K."/>
            <person name="Sheridan E."/>
            <person name="Shownkeen R."/>
            <person name="Sims S."/>
            <person name="Skuce C.D."/>
            <person name="Smith M."/>
            <person name="Steward C."/>
            <person name="Subramanian S."/>
            <person name="Sycamore N."/>
            <person name="Tracey A."/>
            <person name="Tromans A."/>
            <person name="Van Helmond Z."/>
            <person name="Wall M."/>
            <person name="Wallis J.M."/>
            <person name="White S."/>
            <person name="Whitehead S.L."/>
            <person name="Wilkinson J.E."/>
            <person name="Willey D.L."/>
            <person name="Williams H."/>
            <person name="Wilming L."/>
            <person name="Wray P.W."/>
            <person name="Wu Z."/>
            <person name="Coulson A."/>
            <person name="Vaudin M."/>
            <person name="Sulston J.E."/>
            <person name="Durbin R.M."/>
            <person name="Hubbard T."/>
            <person name="Wooster R."/>
            <person name="Dunham I."/>
            <person name="Carter N.P."/>
            <person name="McVean G."/>
            <person name="Ross M.T."/>
            <person name="Harrow J."/>
            <person name="Olson M.V."/>
            <person name="Beck S."/>
            <person name="Rogers J."/>
            <person name="Bentley D.R."/>
        </authorList>
    </citation>
    <scope>NUCLEOTIDE SEQUENCE [LARGE SCALE GENOMIC DNA]</scope>
</reference>
<reference key="3">
    <citation type="journal article" date="2004" name="Genome Res.">
        <title>The status, quality, and expansion of the NIH full-length cDNA project: the Mammalian Gene Collection (MGC).</title>
        <authorList>
            <consortium name="The MGC Project Team"/>
        </authorList>
    </citation>
    <scope>NUCLEOTIDE SEQUENCE [LARGE SCALE MRNA]</scope>
</reference>
<reference key="4">
    <citation type="journal article" date="2004" name="Proc. Natl. Acad. Sci. U.S.A.">
        <title>The human olfactory receptor gene family.</title>
        <authorList>
            <person name="Malnic B."/>
            <person name="Godfrey P.A."/>
            <person name="Buck L.B."/>
        </authorList>
    </citation>
    <scope>IDENTIFICATION</scope>
</reference>
<reference key="5">
    <citation type="journal article" date="2004" name="Proc. Natl. Acad. Sci. U.S.A.">
        <authorList>
            <person name="Malnic B."/>
            <person name="Godfrey P.A."/>
            <person name="Buck L.B."/>
        </authorList>
    </citation>
    <scope>ERRATUM OF PUBMED:14983052</scope>
</reference>
<evidence type="ECO:0000255" key="1"/>
<evidence type="ECO:0000255" key="2">
    <source>
        <dbReference type="PROSITE-ProRule" id="PRU00521"/>
    </source>
</evidence>
<evidence type="ECO:0000305" key="3"/>
<organism>
    <name type="scientific">Homo sapiens</name>
    <name type="common">Human</name>
    <dbReference type="NCBI Taxonomy" id="9606"/>
    <lineage>
        <taxon>Eukaryota</taxon>
        <taxon>Metazoa</taxon>
        <taxon>Chordata</taxon>
        <taxon>Craniata</taxon>
        <taxon>Vertebrata</taxon>
        <taxon>Euteleostomi</taxon>
        <taxon>Mammalia</taxon>
        <taxon>Eutheria</taxon>
        <taxon>Euarchontoglires</taxon>
        <taxon>Primates</taxon>
        <taxon>Haplorrhini</taxon>
        <taxon>Catarrhini</taxon>
        <taxon>Hominidae</taxon>
        <taxon>Homo</taxon>
    </lineage>
</organism>
<sequence>MAWENQTFNSDFLLLGIFNHSPTHTFLFFLVLAIFSVAFMGNSIMVLLIYLDTQLHTPMYFLLSQLSLMDLMLICTTVPKMAFNYLSGSKSISMAGCATQIFFYISLLGSECFLLAVMSYDRYTAICHPLRYTNLMRPKICGLMTAFSWILGSTDGIIDAVATFSFSYCGSREIAHFCCDFPSLLILSCNDTSIFEEVIFICCIVMLVFPVAIIITSYARVILAVIHMGSGEGRRKAFTTCSSHLMVVGMYYGAGLFMCIQPTSHHSPMQDKMVSVFYTIVTPMLNPLIYSLRNKEVTRALMKILGKGKSGD</sequence>